<sequence>MSIDTQSIIENNKRSAHDTGSPEVQVALLTARIELLTKHFKIHKKDHHSRRGLLQMVNRRRSLLDYLNKKDNERYKLLIEKLGLRR</sequence>
<proteinExistence type="inferred from homology"/>
<keyword id="KW-0687">Ribonucleoprotein</keyword>
<keyword id="KW-0689">Ribosomal protein</keyword>
<keyword id="KW-0694">RNA-binding</keyword>
<keyword id="KW-0699">rRNA-binding</keyword>
<protein>
    <recommendedName>
        <fullName evidence="1">Small ribosomal subunit protein uS15</fullName>
    </recommendedName>
    <alternativeName>
        <fullName evidence="3">30S ribosomal protein S15</fullName>
    </alternativeName>
</protein>
<name>RS15_XYLFA</name>
<accession>Q9PGR0</accession>
<feature type="chain" id="PRO_0000115595" description="Small ribosomal subunit protein uS15">
    <location>
        <begin position="1"/>
        <end position="86"/>
    </location>
</feature>
<feature type="region of interest" description="Disordered" evidence="2">
    <location>
        <begin position="1"/>
        <end position="21"/>
    </location>
</feature>
<feature type="compositionally biased region" description="Polar residues" evidence="2">
    <location>
        <begin position="1"/>
        <end position="10"/>
    </location>
</feature>
<evidence type="ECO:0000255" key="1">
    <source>
        <dbReference type="HAMAP-Rule" id="MF_01343"/>
    </source>
</evidence>
<evidence type="ECO:0000256" key="2">
    <source>
        <dbReference type="SAM" id="MobiDB-lite"/>
    </source>
</evidence>
<evidence type="ECO:0000305" key="3"/>
<dbReference type="EMBL" id="AE003849">
    <property type="protein sequence ID" value="AAF83051.1"/>
    <property type="molecule type" value="Genomic_DNA"/>
</dbReference>
<dbReference type="PIR" id="E82831">
    <property type="entry name" value="E82831"/>
</dbReference>
<dbReference type="RefSeq" id="WP_004086259.1">
    <property type="nucleotide sequence ID" value="NC_002488.3"/>
</dbReference>
<dbReference type="SMR" id="Q9PGR0"/>
<dbReference type="STRING" id="160492.XF_0238"/>
<dbReference type="KEGG" id="xfa:XF_0238"/>
<dbReference type="eggNOG" id="COG0184">
    <property type="taxonomic scope" value="Bacteria"/>
</dbReference>
<dbReference type="HOGENOM" id="CLU_148518_1_0_6"/>
<dbReference type="Proteomes" id="UP000000812">
    <property type="component" value="Chromosome"/>
</dbReference>
<dbReference type="GO" id="GO:0022627">
    <property type="term" value="C:cytosolic small ribosomal subunit"/>
    <property type="evidence" value="ECO:0007669"/>
    <property type="project" value="TreeGrafter"/>
</dbReference>
<dbReference type="GO" id="GO:0019843">
    <property type="term" value="F:rRNA binding"/>
    <property type="evidence" value="ECO:0007669"/>
    <property type="project" value="UniProtKB-UniRule"/>
</dbReference>
<dbReference type="GO" id="GO:0003735">
    <property type="term" value="F:structural constituent of ribosome"/>
    <property type="evidence" value="ECO:0007669"/>
    <property type="project" value="InterPro"/>
</dbReference>
<dbReference type="GO" id="GO:0006412">
    <property type="term" value="P:translation"/>
    <property type="evidence" value="ECO:0007669"/>
    <property type="project" value="UniProtKB-UniRule"/>
</dbReference>
<dbReference type="CDD" id="cd00353">
    <property type="entry name" value="Ribosomal_S15p_S13e"/>
    <property type="match status" value="1"/>
</dbReference>
<dbReference type="FunFam" id="1.10.287.10:FF:000002">
    <property type="entry name" value="30S ribosomal protein S15"/>
    <property type="match status" value="1"/>
</dbReference>
<dbReference type="Gene3D" id="6.10.250.3130">
    <property type="match status" value="1"/>
</dbReference>
<dbReference type="Gene3D" id="1.10.287.10">
    <property type="entry name" value="S15/NS1, RNA-binding"/>
    <property type="match status" value="1"/>
</dbReference>
<dbReference type="HAMAP" id="MF_01343_B">
    <property type="entry name" value="Ribosomal_uS15_B"/>
    <property type="match status" value="1"/>
</dbReference>
<dbReference type="InterPro" id="IPR000589">
    <property type="entry name" value="Ribosomal_uS15"/>
</dbReference>
<dbReference type="InterPro" id="IPR005290">
    <property type="entry name" value="Ribosomal_uS15_bac-type"/>
</dbReference>
<dbReference type="InterPro" id="IPR009068">
    <property type="entry name" value="uS15_NS1_RNA-bd_sf"/>
</dbReference>
<dbReference type="NCBIfam" id="TIGR00952">
    <property type="entry name" value="S15_bact"/>
    <property type="match status" value="1"/>
</dbReference>
<dbReference type="PANTHER" id="PTHR23321">
    <property type="entry name" value="RIBOSOMAL PROTEIN S15, BACTERIAL AND ORGANELLAR"/>
    <property type="match status" value="1"/>
</dbReference>
<dbReference type="PANTHER" id="PTHR23321:SF26">
    <property type="entry name" value="SMALL RIBOSOMAL SUBUNIT PROTEIN US15M"/>
    <property type="match status" value="1"/>
</dbReference>
<dbReference type="Pfam" id="PF00312">
    <property type="entry name" value="Ribosomal_S15"/>
    <property type="match status" value="1"/>
</dbReference>
<dbReference type="SMART" id="SM01387">
    <property type="entry name" value="Ribosomal_S15"/>
    <property type="match status" value="1"/>
</dbReference>
<dbReference type="SUPFAM" id="SSF47060">
    <property type="entry name" value="S15/NS1 RNA-binding domain"/>
    <property type="match status" value="1"/>
</dbReference>
<dbReference type="PROSITE" id="PS00362">
    <property type="entry name" value="RIBOSOMAL_S15"/>
    <property type="match status" value="1"/>
</dbReference>
<comment type="function">
    <text evidence="1">One of the primary rRNA binding proteins, it binds directly to 16S rRNA where it helps nucleate assembly of the platform of the 30S subunit by binding and bridging several RNA helices of the 16S rRNA.</text>
</comment>
<comment type="function">
    <text evidence="1">Forms an intersubunit bridge (bridge B4) with the 23S rRNA of the 50S subunit in the ribosome.</text>
</comment>
<comment type="subunit">
    <text evidence="1">Part of the 30S ribosomal subunit. Forms a bridge to the 50S subunit in the 70S ribosome, contacting the 23S rRNA.</text>
</comment>
<comment type="similarity">
    <text evidence="1">Belongs to the universal ribosomal protein uS15 family.</text>
</comment>
<organism>
    <name type="scientific">Xylella fastidiosa (strain 9a5c)</name>
    <dbReference type="NCBI Taxonomy" id="160492"/>
    <lineage>
        <taxon>Bacteria</taxon>
        <taxon>Pseudomonadati</taxon>
        <taxon>Pseudomonadota</taxon>
        <taxon>Gammaproteobacteria</taxon>
        <taxon>Lysobacterales</taxon>
        <taxon>Lysobacteraceae</taxon>
        <taxon>Xylella</taxon>
    </lineage>
</organism>
<gene>
    <name evidence="1" type="primary">rpsO</name>
    <name type="ordered locus">XF_0238</name>
</gene>
<reference key="1">
    <citation type="journal article" date="2000" name="Nature">
        <title>The genome sequence of the plant pathogen Xylella fastidiosa.</title>
        <authorList>
            <person name="Simpson A.J.G."/>
            <person name="Reinach F.C."/>
            <person name="Arruda P."/>
            <person name="Abreu F.A."/>
            <person name="Acencio M."/>
            <person name="Alvarenga R."/>
            <person name="Alves L.M.C."/>
            <person name="Araya J.E."/>
            <person name="Baia G.S."/>
            <person name="Baptista C.S."/>
            <person name="Barros M.H."/>
            <person name="Bonaccorsi E.D."/>
            <person name="Bordin S."/>
            <person name="Bove J.M."/>
            <person name="Briones M.R.S."/>
            <person name="Bueno M.R.P."/>
            <person name="Camargo A.A."/>
            <person name="Camargo L.E.A."/>
            <person name="Carraro D.M."/>
            <person name="Carrer H."/>
            <person name="Colauto N.B."/>
            <person name="Colombo C."/>
            <person name="Costa F.F."/>
            <person name="Costa M.C.R."/>
            <person name="Costa-Neto C.M."/>
            <person name="Coutinho L.L."/>
            <person name="Cristofani M."/>
            <person name="Dias-Neto E."/>
            <person name="Docena C."/>
            <person name="El-Dorry H."/>
            <person name="Facincani A.P."/>
            <person name="Ferreira A.J.S."/>
            <person name="Ferreira V.C.A."/>
            <person name="Ferro J.A."/>
            <person name="Fraga J.S."/>
            <person name="Franca S.C."/>
            <person name="Franco M.C."/>
            <person name="Frohme M."/>
            <person name="Furlan L.R."/>
            <person name="Garnier M."/>
            <person name="Goldman G.H."/>
            <person name="Goldman M.H.S."/>
            <person name="Gomes S.L."/>
            <person name="Gruber A."/>
            <person name="Ho P.L."/>
            <person name="Hoheisel J.D."/>
            <person name="Junqueira M.L."/>
            <person name="Kemper E.L."/>
            <person name="Kitajima J.P."/>
            <person name="Krieger J.E."/>
            <person name="Kuramae E.E."/>
            <person name="Laigret F."/>
            <person name="Lambais M.R."/>
            <person name="Leite L.C.C."/>
            <person name="Lemos E.G.M."/>
            <person name="Lemos M.V.F."/>
            <person name="Lopes S.A."/>
            <person name="Lopes C.R."/>
            <person name="Machado J.A."/>
            <person name="Machado M.A."/>
            <person name="Madeira A.M.B.N."/>
            <person name="Madeira H.M.F."/>
            <person name="Marino C.L."/>
            <person name="Marques M.V."/>
            <person name="Martins E.A.L."/>
            <person name="Martins E.M.F."/>
            <person name="Matsukuma A.Y."/>
            <person name="Menck C.F.M."/>
            <person name="Miracca E.C."/>
            <person name="Miyaki C.Y."/>
            <person name="Monteiro-Vitorello C.B."/>
            <person name="Moon D.H."/>
            <person name="Nagai M.A."/>
            <person name="Nascimento A.L.T.O."/>
            <person name="Netto L.E.S."/>
            <person name="Nhani A. Jr."/>
            <person name="Nobrega F.G."/>
            <person name="Nunes L.R."/>
            <person name="Oliveira M.A."/>
            <person name="de Oliveira M.C."/>
            <person name="de Oliveira R.C."/>
            <person name="Palmieri D.A."/>
            <person name="Paris A."/>
            <person name="Peixoto B.R."/>
            <person name="Pereira G.A.G."/>
            <person name="Pereira H.A. Jr."/>
            <person name="Pesquero J.B."/>
            <person name="Quaggio R.B."/>
            <person name="Roberto P.G."/>
            <person name="Rodrigues V."/>
            <person name="de Rosa A.J.M."/>
            <person name="de Rosa V.E. Jr."/>
            <person name="de Sa R.G."/>
            <person name="Santelli R.V."/>
            <person name="Sawasaki H.E."/>
            <person name="da Silva A.C.R."/>
            <person name="da Silva A.M."/>
            <person name="da Silva F.R."/>
            <person name="Silva W.A. Jr."/>
            <person name="da Silveira J.F."/>
            <person name="Silvestri M.L.Z."/>
            <person name="Siqueira W.J."/>
            <person name="de Souza A.A."/>
            <person name="de Souza A.P."/>
            <person name="Terenzi M.F."/>
            <person name="Truffi D."/>
            <person name="Tsai S.M."/>
            <person name="Tsuhako M.H."/>
            <person name="Vallada H."/>
            <person name="Van Sluys M.A."/>
            <person name="Verjovski-Almeida S."/>
            <person name="Vettore A.L."/>
            <person name="Zago M.A."/>
            <person name="Zatz M."/>
            <person name="Meidanis J."/>
            <person name="Setubal J.C."/>
        </authorList>
    </citation>
    <scope>NUCLEOTIDE SEQUENCE [LARGE SCALE GENOMIC DNA]</scope>
    <source>
        <strain>9a5c</strain>
    </source>
</reference>